<comment type="similarity">
    <text evidence="1">Belongs to the UPF0301 (AlgH) family.</text>
</comment>
<dbReference type="EMBL" id="CP001110">
    <property type="protein sequence ID" value="ACF44345.1"/>
    <property type="molecule type" value="Genomic_DNA"/>
</dbReference>
<dbReference type="RefSeq" id="WP_012508822.1">
    <property type="nucleotide sequence ID" value="NC_011060.1"/>
</dbReference>
<dbReference type="SMR" id="B4SD86"/>
<dbReference type="STRING" id="324925.Ppha_2142"/>
<dbReference type="KEGG" id="pph:Ppha_2142"/>
<dbReference type="eggNOG" id="COG1678">
    <property type="taxonomic scope" value="Bacteria"/>
</dbReference>
<dbReference type="HOGENOM" id="CLU_057596_2_1_10"/>
<dbReference type="OrthoDB" id="9807486at2"/>
<dbReference type="Proteomes" id="UP000002724">
    <property type="component" value="Chromosome"/>
</dbReference>
<dbReference type="GO" id="GO:0005829">
    <property type="term" value="C:cytosol"/>
    <property type="evidence" value="ECO:0007669"/>
    <property type="project" value="TreeGrafter"/>
</dbReference>
<dbReference type="Gene3D" id="3.40.1740.10">
    <property type="entry name" value="VC0467-like"/>
    <property type="match status" value="1"/>
</dbReference>
<dbReference type="HAMAP" id="MF_00758">
    <property type="entry name" value="UPF0301"/>
    <property type="match status" value="1"/>
</dbReference>
<dbReference type="InterPro" id="IPR003774">
    <property type="entry name" value="AlgH-like"/>
</dbReference>
<dbReference type="PANTHER" id="PTHR30327">
    <property type="entry name" value="UNCHARACTERIZED PROTEIN YQGE"/>
    <property type="match status" value="1"/>
</dbReference>
<dbReference type="PANTHER" id="PTHR30327:SF1">
    <property type="entry name" value="UPF0301 PROTEIN YQGE"/>
    <property type="match status" value="1"/>
</dbReference>
<dbReference type="Pfam" id="PF02622">
    <property type="entry name" value="DUF179"/>
    <property type="match status" value="1"/>
</dbReference>
<dbReference type="SUPFAM" id="SSF143456">
    <property type="entry name" value="VC0467-like"/>
    <property type="match status" value="1"/>
</dbReference>
<gene>
    <name type="ordered locus">Ppha_2142</name>
</gene>
<accession>B4SD86</accession>
<sequence>MVNEFDKLKAGKLLLASANMLESSFKRTVLVVCEHNERGSLAFILNRPMEFKVCEAVSGFEEVEERLHMGGPVEVDTVHFLHSRGDLIDGSLEILPGIFWGGDKNELSYLLNTGVMMPSEIRFFLGYAGWSAGQLEAEFEEGAWYTAEASKDIIFSDAYERMWGRTVRSKGGEYQIVANSPELPGLN</sequence>
<evidence type="ECO:0000255" key="1">
    <source>
        <dbReference type="HAMAP-Rule" id="MF_00758"/>
    </source>
</evidence>
<organism>
    <name type="scientific">Pelodictyon phaeoclathratiforme (strain DSM 5477 / BU-1)</name>
    <dbReference type="NCBI Taxonomy" id="324925"/>
    <lineage>
        <taxon>Bacteria</taxon>
        <taxon>Pseudomonadati</taxon>
        <taxon>Chlorobiota</taxon>
        <taxon>Chlorobiia</taxon>
        <taxon>Chlorobiales</taxon>
        <taxon>Chlorobiaceae</taxon>
        <taxon>Chlorobium/Pelodictyon group</taxon>
        <taxon>Pelodictyon</taxon>
    </lineage>
</organism>
<protein>
    <recommendedName>
        <fullName evidence="1">UPF0301 protein Ppha_2142</fullName>
    </recommendedName>
</protein>
<reference key="1">
    <citation type="submission" date="2008-06" db="EMBL/GenBank/DDBJ databases">
        <title>Complete sequence of Pelodictyon phaeoclathratiforme BU-1.</title>
        <authorList>
            <consortium name="US DOE Joint Genome Institute"/>
            <person name="Lucas S."/>
            <person name="Copeland A."/>
            <person name="Lapidus A."/>
            <person name="Glavina del Rio T."/>
            <person name="Dalin E."/>
            <person name="Tice H."/>
            <person name="Bruce D."/>
            <person name="Goodwin L."/>
            <person name="Pitluck S."/>
            <person name="Schmutz J."/>
            <person name="Larimer F."/>
            <person name="Land M."/>
            <person name="Hauser L."/>
            <person name="Kyrpides N."/>
            <person name="Mikhailova N."/>
            <person name="Liu Z."/>
            <person name="Li T."/>
            <person name="Zhao F."/>
            <person name="Overmann J."/>
            <person name="Bryant D.A."/>
            <person name="Richardson P."/>
        </authorList>
    </citation>
    <scope>NUCLEOTIDE SEQUENCE [LARGE SCALE GENOMIC DNA]</scope>
    <source>
        <strain>DSM 5477 / BU-1</strain>
    </source>
</reference>
<feature type="chain" id="PRO_1000198284" description="UPF0301 protein Ppha_2142">
    <location>
        <begin position="1"/>
        <end position="187"/>
    </location>
</feature>
<proteinExistence type="inferred from homology"/>
<keyword id="KW-1185">Reference proteome</keyword>
<name>Y2142_PELPB</name>